<name>Z_PARVP</name>
<comment type="function">
    <text evidence="1 2">Plays a crucial role in virion assembly and budding. Expressed late in the virus life cycle, it acts as an inhibitor of viral transcription and RNA synthesis by interacting with the viral polymerase L. Presumably recruits the NP encapsidated genome to cellular membranes at budding sites via direct interaction with NP. Plays critical roles in the final steps of viral release by interacting with host TSG101, a member of the vacuolar protein-sorting pathway and using other cellular host proteins involved in vesicle formation pathway. The budding of the virus progeny occurs after association of protein Z with the viral glycoprotein complex SSP-GP1-GP2 at the cell periphery, step that requires myristoylation of protein Z. Also selectively represses protein production by associating with host eIF4E (By similarity). In cell-based minigenome assay, has an inhibitory effect on the ribonucleoprotein machinery (vRNP), which is responsible for the replication and transcription of the viral genome (By similarity).</text>
</comment>
<comment type="subunit">
    <text evidence="2">Interacts with protein NP; this interaction probably directs the encapsidated genome to budding sites. Interacts (via RING domain) with polymerase L; this interaction inhibits viral transcription and replication, Z partially blocks the product exit tunnel for the releasing nascent RNA product. Interacts with the glycoprotein complex; this interaction plays a role in virion budding. Interacts with host eIF4E; this interaction results in eIF4E reduced affinity for its substrate, the 5'-m7 G cap structure. Interacts (via late-budding domain) with host TSG101; this interaction is essential for budding and release of viral particles. Interacts with host RPLP0; this interaction may serve to load ribosome-like particles inside the virion. Interacts with host PML; this interaction induces PML bodies redistribution in the cytoplasm upon viral infection.</text>
</comment>
<comment type="subcellular location">
    <subcellularLocation>
        <location evidence="2">Virion</location>
    </subcellularLocation>
    <subcellularLocation>
        <location evidence="2">Host cytoplasm</location>
        <location evidence="2">Host perinuclear region</location>
    </subcellularLocation>
    <subcellularLocation>
        <location evidence="2">Host cell membrane</location>
        <topology evidence="2">Lipid-anchor</topology>
        <orientation evidence="2">Cytoplasmic side</orientation>
    </subcellularLocation>
    <text evidence="2">Mainly perinuclear. During budding, associates at the inner side of the plasma membrane of infected cells.</text>
</comment>
<comment type="domain">
    <text evidence="2">Late-budding domains (L domains) are short sequence motifs essential for viral particle budding. They recruit proteins of the host ESCRT machinery (Endosomal Sorting Complex Required for Transport) or ESCRT-associated proteins.</text>
</comment>
<comment type="PTM">
    <text evidence="1">Myristoylation is required for the role of RING finger protein Z in assembly and budding.</text>
</comment>
<comment type="similarity">
    <text>Belongs to the arenaviridae Z protein family.</text>
</comment>
<sequence>MGLRYSKAVKDKYGDREIEGRATMTLNLPQGLYGRFNCKRCWFATKGLIACSDHYLCLNCLTIMLSDGNFCEVCGKTLPKKIVFEESPSAPPYDG</sequence>
<dbReference type="EMBL" id="EU627613">
    <property type="protein sequence ID" value="ACC94301.1"/>
    <property type="molecule type" value="Genomic_RNA"/>
</dbReference>
<dbReference type="RefSeq" id="YP_001936027.1">
    <property type="nucleotide sequence ID" value="NC_010761.1"/>
</dbReference>
<dbReference type="KEGG" id="vg:6334529"/>
<dbReference type="Proteomes" id="UP000009265">
    <property type="component" value="Genome"/>
</dbReference>
<dbReference type="GO" id="GO:0044220">
    <property type="term" value="C:host cell perinuclear region of cytoplasm"/>
    <property type="evidence" value="ECO:0007669"/>
    <property type="project" value="UniProtKB-SubCell"/>
</dbReference>
<dbReference type="GO" id="GO:0020002">
    <property type="term" value="C:host cell plasma membrane"/>
    <property type="evidence" value="ECO:0007669"/>
    <property type="project" value="UniProtKB-SubCell"/>
</dbReference>
<dbReference type="GO" id="GO:0016020">
    <property type="term" value="C:membrane"/>
    <property type="evidence" value="ECO:0007669"/>
    <property type="project" value="UniProtKB-UniRule"/>
</dbReference>
<dbReference type="GO" id="GO:0044423">
    <property type="term" value="C:virion component"/>
    <property type="evidence" value="ECO:0007669"/>
    <property type="project" value="UniProtKB-UniRule"/>
</dbReference>
<dbReference type="GO" id="GO:0003723">
    <property type="term" value="F:RNA binding"/>
    <property type="evidence" value="ECO:0007669"/>
    <property type="project" value="UniProtKB-UniRule"/>
</dbReference>
<dbReference type="GO" id="GO:0008270">
    <property type="term" value="F:zinc ion binding"/>
    <property type="evidence" value="ECO:0007669"/>
    <property type="project" value="UniProtKB-UniRule"/>
</dbReference>
<dbReference type="GO" id="GO:0046761">
    <property type="term" value="P:viral budding from plasma membrane"/>
    <property type="evidence" value="ECO:0007669"/>
    <property type="project" value="UniProtKB-UniRule"/>
</dbReference>
<dbReference type="GO" id="GO:0039702">
    <property type="term" value="P:viral budding via host ESCRT complex"/>
    <property type="evidence" value="ECO:0007669"/>
    <property type="project" value="UniProtKB-UniRule"/>
</dbReference>
<dbReference type="Gene3D" id="3.30.160.310">
    <property type="match status" value="1"/>
</dbReference>
<dbReference type="HAMAP" id="MF_04087">
    <property type="entry name" value="ARENA_Z"/>
    <property type="match status" value="1"/>
</dbReference>
<dbReference type="InterPro" id="IPR024183">
    <property type="entry name" value="RING_finger_Z_arenaviridae"/>
</dbReference>
<dbReference type="InterPro" id="IPR038485">
    <property type="entry name" value="Z_RING-type_Znf_sf"/>
</dbReference>
<dbReference type="InterPro" id="IPR003224">
    <property type="entry name" value="Z_RING_Znf"/>
</dbReference>
<dbReference type="Pfam" id="PF03854">
    <property type="entry name" value="zf-P11"/>
    <property type="match status" value="1"/>
</dbReference>
<dbReference type="PIRSF" id="PIRSF004030">
    <property type="entry name" value="Z_ArenaV"/>
    <property type="match status" value="1"/>
</dbReference>
<reference key="1">
    <citation type="journal article" date="2008" name="Curr. Opin. Microbiol.">
        <title>Phylogeny of the genus Arenavirus.</title>
        <authorList>
            <person name="Charrel R.N."/>
            <person name="de Lamballerie X."/>
            <person name="Emonet S."/>
        </authorList>
    </citation>
    <scope>NUCLEOTIDE SEQUENCE [GENOMIC RNA]</scope>
</reference>
<organismHost>
    <name type="scientific">Sooretamys angouya</name>
    <name type="common">Paraguayan rice rat</name>
    <name type="synonym">Oryzomys angouya</name>
    <dbReference type="NCBI Taxonomy" id="530180"/>
</organismHost>
<gene>
    <name evidence="2" type="primary">Z</name>
</gene>
<accession>B2MW50</accession>
<keyword id="KW-1032">Host cell membrane</keyword>
<keyword id="KW-1035">Host cytoplasm</keyword>
<keyword id="KW-1043">Host membrane</keyword>
<keyword id="KW-0945">Host-virus interaction</keyword>
<keyword id="KW-0449">Lipoprotein</keyword>
<keyword id="KW-0472">Membrane</keyword>
<keyword id="KW-0479">Metal-binding</keyword>
<keyword id="KW-0519">Myristate</keyword>
<keyword id="KW-1185">Reference proteome</keyword>
<keyword id="KW-1198">Viral budding</keyword>
<keyword id="KW-1187">Viral budding via the host ESCRT complexes</keyword>
<keyword id="KW-1188">Viral release from host cell</keyword>
<keyword id="KW-0946">Virion</keyword>
<keyword id="KW-0862">Zinc</keyword>
<keyword id="KW-0863">Zinc-finger</keyword>
<proteinExistence type="inferred from homology"/>
<feature type="initiator methionine" description="Removed; by host" evidence="2">
    <location>
        <position position="1"/>
    </location>
</feature>
<feature type="chain" id="PRO_0000361038" description="RING finger protein Z" evidence="2">
    <location>
        <begin position="2"/>
        <end position="95"/>
    </location>
</feature>
<feature type="zinc finger region" description="RING-type; atypical" evidence="2">
    <location>
        <begin position="38"/>
        <end position="74"/>
    </location>
</feature>
<feature type="short sequence motif" description="PTAP/PSAP motif" evidence="2">
    <location>
        <begin position="88"/>
        <end position="91"/>
    </location>
</feature>
<feature type="lipid moiety-binding region" description="N-myristoyl glycine; by host" evidence="2">
    <location>
        <position position="2"/>
    </location>
</feature>
<organism>
    <name type="scientific">Parana mammarenavirus (isolate Rat/Paraguay/12056/1965)</name>
    <name type="common">PARV</name>
    <name type="synonym">Paran mammarenavirus</name>
    <dbReference type="NCBI Taxonomy" id="3052323"/>
    <lineage>
        <taxon>Viruses</taxon>
        <taxon>Riboviria</taxon>
        <taxon>Orthornavirae</taxon>
        <taxon>Negarnaviricota</taxon>
        <taxon>Polyploviricotina</taxon>
        <taxon>Ellioviricetes</taxon>
        <taxon>Bunyavirales</taxon>
        <taxon>Arenaviridae</taxon>
        <taxon>Mammarenavirus</taxon>
    </lineage>
</organism>
<protein>
    <recommendedName>
        <fullName evidence="2">RING finger protein Z</fullName>
        <shortName evidence="2">Protein Z</shortName>
    </recommendedName>
    <alternativeName>
        <fullName evidence="2">Zinc-binding protein</fullName>
    </alternativeName>
</protein>
<evidence type="ECO:0000250" key="1">
    <source>
        <dbReference type="UniProtKB" id="P18541"/>
    </source>
</evidence>
<evidence type="ECO:0000255" key="2">
    <source>
        <dbReference type="HAMAP-Rule" id="MF_04087"/>
    </source>
</evidence>